<reference key="1">
    <citation type="submission" date="2007-07" db="EMBL/GenBank/DDBJ databases">
        <title>Complete sequence of chromosome of Shewanella baltica OS185.</title>
        <authorList>
            <consortium name="US DOE Joint Genome Institute"/>
            <person name="Copeland A."/>
            <person name="Lucas S."/>
            <person name="Lapidus A."/>
            <person name="Barry K."/>
            <person name="Glavina del Rio T."/>
            <person name="Dalin E."/>
            <person name="Tice H."/>
            <person name="Pitluck S."/>
            <person name="Sims D."/>
            <person name="Brettin T."/>
            <person name="Bruce D."/>
            <person name="Detter J.C."/>
            <person name="Han C."/>
            <person name="Schmutz J."/>
            <person name="Larimer F."/>
            <person name="Land M."/>
            <person name="Hauser L."/>
            <person name="Kyrpides N."/>
            <person name="Mikhailova N."/>
            <person name="Brettar I."/>
            <person name="Rodrigues J."/>
            <person name="Konstantinidis K."/>
            <person name="Tiedje J."/>
            <person name="Richardson P."/>
        </authorList>
    </citation>
    <scope>NUCLEOTIDE SEQUENCE [LARGE SCALE GENOMIC DNA]</scope>
    <source>
        <strain>OS185</strain>
    </source>
</reference>
<feature type="chain" id="PRO_1000056853" description="Nucleotide-binding protein Shew185_0683">
    <location>
        <begin position="1"/>
        <end position="284"/>
    </location>
</feature>
<feature type="binding site" evidence="1">
    <location>
        <begin position="8"/>
        <end position="15"/>
    </location>
    <ligand>
        <name>ATP</name>
        <dbReference type="ChEBI" id="CHEBI:30616"/>
    </ligand>
</feature>
<feature type="binding site" evidence="1">
    <location>
        <begin position="56"/>
        <end position="59"/>
    </location>
    <ligand>
        <name>GTP</name>
        <dbReference type="ChEBI" id="CHEBI:37565"/>
    </ligand>
</feature>
<sequence length="284" mass="32265">MKLVIVSGRSGSGKSVALRVLEDLGYYCVDNLPLPLIGTLLEQLKGSNDLVAISVDVRNMPEQDKVLVKQLASLPPDTELTSFFLNSSDKILLKRYSETRRLHPLSKSQVSLQEAIKLEGKLLEPMSKLVDHYIDTSNLNIYDLSDQVRQILLGSVDKELVINFESFGFKHGMPTEADFMFDVRFLPNPHWELALRPLTGLDEPVAEFLNRQPLVNKFIWQIENLLETWLPHLERNNRSYLTVAIGCTGGQHRSVYVAEQLAKRFSNGKHKVYARHRELNNAKA</sequence>
<keyword id="KW-0067">ATP-binding</keyword>
<keyword id="KW-0342">GTP-binding</keyword>
<keyword id="KW-0547">Nucleotide-binding</keyword>
<dbReference type="EMBL" id="CP000753">
    <property type="protein sequence ID" value="ABS06840.1"/>
    <property type="molecule type" value="Genomic_DNA"/>
</dbReference>
<dbReference type="SMR" id="A6WJ51"/>
<dbReference type="KEGG" id="sbm:Shew185_0683"/>
<dbReference type="HOGENOM" id="CLU_059558_1_1_6"/>
<dbReference type="GO" id="GO:0005524">
    <property type="term" value="F:ATP binding"/>
    <property type="evidence" value="ECO:0007669"/>
    <property type="project" value="UniProtKB-UniRule"/>
</dbReference>
<dbReference type="GO" id="GO:0005525">
    <property type="term" value="F:GTP binding"/>
    <property type="evidence" value="ECO:0007669"/>
    <property type="project" value="UniProtKB-UniRule"/>
</dbReference>
<dbReference type="HAMAP" id="MF_00636">
    <property type="entry name" value="RapZ_like"/>
    <property type="match status" value="1"/>
</dbReference>
<dbReference type="InterPro" id="IPR027417">
    <property type="entry name" value="P-loop_NTPase"/>
</dbReference>
<dbReference type="InterPro" id="IPR005337">
    <property type="entry name" value="RapZ-like"/>
</dbReference>
<dbReference type="InterPro" id="IPR053930">
    <property type="entry name" value="RapZ-like_N"/>
</dbReference>
<dbReference type="InterPro" id="IPR053931">
    <property type="entry name" value="RapZ_C"/>
</dbReference>
<dbReference type="NCBIfam" id="NF003828">
    <property type="entry name" value="PRK05416.1"/>
    <property type="match status" value="1"/>
</dbReference>
<dbReference type="PANTHER" id="PTHR30448">
    <property type="entry name" value="RNASE ADAPTER PROTEIN RAPZ"/>
    <property type="match status" value="1"/>
</dbReference>
<dbReference type="PANTHER" id="PTHR30448:SF0">
    <property type="entry name" value="RNASE ADAPTER PROTEIN RAPZ"/>
    <property type="match status" value="1"/>
</dbReference>
<dbReference type="Pfam" id="PF22740">
    <property type="entry name" value="PapZ_C"/>
    <property type="match status" value="1"/>
</dbReference>
<dbReference type="Pfam" id="PF03668">
    <property type="entry name" value="RapZ-like_N"/>
    <property type="match status" value="1"/>
</dbReference>
<dbReference type="PIRSF" id="PIRSF005052">
    <property type="entry name" value="P-loopkin"/>
    <property type="match status" value="1"/>
</dbReference>
<dbReference type="SUPFAM" id="SSF52540">
    <property type="entry name" value="P-loop containing nucleoside triphosphate hydrolases"/>
    <property type="match status" value="1"/>
</dbReference>
<organism>
    <name type="scientific">Shewanella baltica (strain OS185)</name>
    <dbReference type="NCBI Taxonomy" id="402882"/>
    <lineage>
        <taxon>Bacteria</taxon>
        <taxon>Pseudomonadati</taxon>
        <taxon>Pseudomonadota</taxon>
        <taxon>Gammaproteobacteria</taxon>
        <taxon>Alteromonadales</taxon>
        <taxon>Shewanellaceae</taxon>
        <taxon>Shewanella</taxon>
    </lineage>
</organism>
<comment type="function">
    <text evidence="1">Displays ATPase and GTPase activities.</text>
</comment>
<comment type="similarity">
    <text evidence="1">Belongs to the RapZ-like family.</text>
</comment>
<accession>A6WJ51</accession>
<name>Y683_SHEB8</name>
<proteinExistence type="inferred from homology"/>
<evidence type="ECO:0000255" key="1">
    <source>
        <dbReference type="HAMAP-Rule" id="MF_00636"/>
    </source>
</evidence>
<gene>
    <name type="ordered locus">Shew185_0683</name>
</gene>
<protein>
    <recommendedName>
        <fullName evidence="1">Nucleotide-binding protein Shew185_0683</fullName>
    </recommendedName>
</protein>